<evidence type="ECO:0000250" key="1"/>
<evidence type="ECO:0000250" key="2">
    <source>
        <dbReference type="UniProtKB" id="O15169"/>
    </source>
</evidence>
<evidence type="ECO:0000250" key="3">
    <source>
        <dbReference type="UniProtKB" id="Q9Y2T1"/>
    </source>
</evidence>
<evidence type="ECO:0000255" key="4">
    <source>
        <dbReference type="PROSITE-ProRule" id="PRU00069"/>
    </source>
</evidence>
<evidence type="ECO:0000255" key="5">
    <source>
        <dbReference type="PROSITE-ProRule" id="PRU00171"/>
    </source>
</evidence>
<evidence type="ECO:0000256" key="6">
    <source>
        <dbReference type="SAM" id="MobiDB-lite"/>
    </source>
</evidence>
<evidence type="ECO:0000269" key="7">
    <source>
    </source>
</evidence>
<evidence type="ECO:0000269" key="8">
    <source>
    </source>
</evidence>
<evidence type="ECO:0000269" key="9">
    <source>
    </source>
</evidence>
<evidence type="ECO:0000305" key="10"/>
<evidence type="ECO:0000312" key="11">
    <source>
        <dbReference type="MGI" id="MGI:1270862"/>
    </source>
</evidence>
<reference key="1">
    <citation type="journal article" date="1998" name="Science">
        <title>Functional interaction of an axin homolog, conductin, with beta-catenin, APC, and GSK3beta.</title>
        <authorList>
            <person name="Behrens J."/>
            <person name="Jerchow B.-A."/>
            <person name="Wuertele M."/>
            <person name="Grimm J."/>
            <person name="Asbrand C."/>
            <person name="Wirtz R."/>
            <person name="Kuehl M."/>
            <person name="Wedlich D."/>
            <person name="Birchmeier W."/>
        </authorList>
    </citation>
    <scope>NUCLEOTIDE SEQUENCE [MRNA]</scope>
</reference>
<reference key="2">
    <citation type="submission" date="1999-11" db="EMBL/GenBank/DDBJ databases">
        <title>Properties of mouse Axin2 and human AXIN2: chromosomal location, expression pattern, interaction with Axin and effects on embryonic axis formation.</title>
        <authorList>
            <person name="Zhang T."/>
            <person name="Fagotto F."/>
            <person name="Hsu W."/>
            <person name="Zeng L."/>
            <person name="Gilbert D."/>
            <person name="Copeland N.G."/>
            <person name="Jenkins N.A."/>
            <person name="Warburton D."/>
            <person name="Costantini F."/>
        </authorList>
    </citation>
    <scope>NUCLEOTIDE SEQUENCE [MRNA]</scope>
</reference>
<reference key="3">
    <citation type="journal article" date="2009" name="PLoS Biol.">
        <title>Lineage-specific biology revealed by a finished genome assembly of the mouse.</title>
        <authorList>
            <person name="Church D.M."/>
            <person name="Goodstadt L."/>
            <person name="Hillier L.W."/>
            <person name="Zody M.C."/>
            <person name="Goldstein S."/>
            <person name="She X."/>
            <person name="Bult C.J."/>
            <person name="Agarwala R."/>
            <person name="Cherry J.L."/>
            <person name="DiCuccio M."/>
            <person name="Hlavina W."/>
            <person name="Kapustin Y."/>
            <person name="Meric P."/>
            <person name="Maglott D."/>
            <person name="Birtle Z."/>
            <person name="Marques A.C."/>
            <person name="Graves T."/>
            <person name="Zhou S."/>
            <person name="Teague B."/>
            <person name="Potamousis K."/>
            <person name="Churas C."/>
            <person name="Place M."/>
            <person name="Herschleb J."/>
            <person name="Runnheim R."/>
            <person name="Forrest D."/>
            <person name="Amos-Landgraf J."/>
            <person name="Schwartz D.C."/>
            <person name="Cheng Z."/>
            <person name="Lindblad-Toh K."/>
            <person name="Eichler E.E."/>
            <person name="Ponting C.P."/>
        </authorList>
    </citation>
    <scope>NUCLEOTIDE SEQUENCE [LARGE SCALE GENOMIC DNA]</scope>
    <source>
        <strain>C57BL/6J</strain>
    </source>
</reference>
<reference key="4">
    <citation type="submission" date="2005-07" db="EMBL/GenBank/DDBJ databases">
        <authorList>
            <person name="Mural R.J."/>
            <person name="Adams M.D."/>
            <person name="Myers E.W."/>
            <person name="Smith H.O."/>
            <person name="Venter J.C."/>
        </authorList>
    </citation>
    <scope>NUCLEOTIDE SEQUENCE [LARGE SCALE GENOMIC DNA]</scope>
</reference>
<reference key="5">
    <citation type="journal article" date="2004" name="Genome Res.">
        <title>The status, quality, and expansion of the NIH full-length cDNA project: the Mammalian Gene Collection (MGC).</title>
        <authorList>
            <consortium name="The MGC Project Team"/>
        </authorList>
    </citation>
    <scope>NUCLEOTIDE SEQUENCE [LARGE SCALE MRNA]</scope>
    <source>
        <strain>C57BL/6J</strain>
        <tissue>Brain</tissue>
    </source>
</reference>
<reference key="6">
    <citation type="journal article" date="2002" name="Genes Dev.">
        <title>The ankyrin repeat protein diversin recruits casein kinase Iepsilon to the beta-catenin degradation complex and acts in both canonical Wnt and Wnt/JNK signaling.</title>
        <authorList>
            <person name="Schwarz-Romond T."/>
            <person name="Asbrand C."/>
            <person name="Bakkers J."/>
            <person name="Kuehl M."/>
            <person name="Schaeffer H.J."/>
            <person name="Huelsken J."/>
            <person name="Behrens J."/>
            <person name="Hammerschmidt M."/>
            <person name="Birchmeier W."/>
        </authorList>
    </citation>
    <scope>INTERACTION WITH ANKRD6</scope>
</reference>
<reference key="7">
    <citation type="journal article" date="2013" name="Immunity">
        <title>A network of high-mobility group box transcription factors programs innate interleukin-17 production.</title>
        <authorList>
            <consortium name="Immunological Genome Project Consortium"/>
            <person name="Malhotra N."/>
            <person name="Narayan K."/>
            <person name="Cho O.H."/>
            <person name="Sylvia K.E."/>
            <person name="Yin C."/>
            <person name="Melichar H."/>
            <person name="Rashighi M."/>
            <person name="Lefebvre V."/>
            <person name="Harris J.E."/>
            <person name="Berg L.J."/>
            <person name="Kang J."/>
        </authorList>
    </citation>
    <scope>TISSUE SPECIFICITY</scope>
</reference>
<reference key="8">
    <citation type="journal article" date="2016" name="Dev. Biol.">
        <title>Bmp4-Msx1 signaling and Osr2 control tooth organogenesis through antagonistic regulation of secreted Wnt antagonists.</title>
        <authorList>
            <person name="Jia S."/>
            <person name="Kwon H.E."/>
            <person name="Lan Y."/>
            <person name="Zhou J."/>
            <person name="Liu H."/>
            <person name="Jiang R."/>
        </authorList>
    </citation>
    <scope>DEVELOPMENTAL STAGE</scope>
</reference>
<gene>
    <name evidence="11" type="primary">Axin2</name>
</gene>
<accession>O88566</accession>
<accession>Q6PFZ9</accession>
<accession>Q9QXJ6</accession>
<name>AXIN2_MOUSE</name>
<sequence length="840" mass="92906">MSSAVLVTLLPDPSSSFREDAPRPPVPGEEGETPPCQPSVGKVQSTKPMPVSSNARRNEDGLGEPEGRASPDSPLTRWTKSLHSLLGDQDGAYLFRTFLEREKCVDTLDFWFACNGFRQMNLKDTKTLRVAKAIYKRYIENNSVVSKQLKPATKTYIRDGIKKQQIGSVMFDQAQTEIQAVMEENAYQVFLTSDIYLEYVRSGGENTAYMSNGGLGSLKVLCGYLPTLNEEEEWTCADLKCKLSPTVVGLSSKTLRATASVRSTETAENGFRSFKRSDPVNPYHVGSGYVFAPATSANDSELSSDALTDDSMSMTDSSVDGVPPYRMGSKKQLQREMHRSVKANGQVSLPHFPRTHRLPKEMTPVEPAAFAAELISRLEKLKLELESRHSLEERLQQIREDEEKEGSEQALSSRDGAPVQHPLALLPSGSYEEDPQTILDDHLSRVLKTPGCQSPGVGRYSPRSRSPDHHHQHHHHQQCHTLLPTGGKLPPVAACPLLGGKSFLTKQTTKHVHHHYIHHHAVPKTKEEIEAEATQRVRCLCPGGTDYYCYSKCKSHPKAPEPLPGEQFCGSRGGTLPKRNAKGTEPGLALSARDGGMSSAAGAPQLPGEEGDRSQDVWQWMLESERQSKSKPHSAQSIRKSYPLESACAAPGERVSRHHLLGASGHSRSVARAHPFTQDPAMPPLTPPNTLAQLEEACRRLAEVSKPQKQRCCVASQQRDRNHSAAGQAGASPFANPSLAPEDHKEPKKLASVHALQASELVVTYFFCGEEIPYRRMLKAQSLTLGHFKEQLSKKGNYRYYFKKASDEFACGAVFEEIWDDETVLPMYEGRILGKVERID</sequence>
<dbReference type="EMBL" id="AF073788">
    <property type="protein sequence ID" value="AAC26047.1"/>
    <property type="molecule type" value="mRNA"/>
</dbReference>
<dbReference type="EMBL" id="AF205889">
    <property type="protein sequence ID" value="AAF22800.1"/>
    <property type="molecule type" value="mRNA"/>
</dbReference>
<dbReference type="EMBL" id="AL662893">
    <property type="status" value="NOT_ANNOTATED_CDS"/>
    <property type="molecule type" value="Genomic_DNA"/>
</dbReference>
<dbReference type="EMBL" id="CH466558">
    <property type="protein sequence ID" value="EDL34346.1"/>
    <property type="molecule type" value="Genomic_DNA"/>
</dbReference>
<dbReference type="EMBL" id="BC057338">
    <property type="protein sequence ID" value="AAH57338.1"/>
    <property type="molecule type" value="mRNA"/>
</dbReference>
<dbReference type="CCDS" id="CCDS25575.1"/>
<dbReference type="RefSeq" id="NP_001404340.1">
    <property type="nucleotide sequence ID" value="NM_001417411.1"/>
</dbReference>
<dbReference type="RefSeq" id="NP_001404341.1">
    <property type="nucleotide sequence ID" value="NM_001417412.1"/>
</dbReference>
<dbReference type="RefSeq" id="NP_001404342.1">
    <property type="nucleotide sequence ID" value="NM_001417413.1"/>
</dbReference>
<dbReference type="RefSeq" id="NP_001404343.1">
    <property type="nucleotide sequence ID" value="NM_001417414.1"/>
</dbReference>
<dbReference type="RefSeq" id="NP_056547.3">
    <property type="nucleotide sequence ID" value="NM_015732.4"/>
</dbReference>
<dbReference type="RefSeq" id="XP_006532120.1">
    <property type="nucleotide sequence ID" value="XM_006532057.3"/>
</dbReference>
<dbReference type="RefSeq" id="XP_006532121.1">
    <property type="nucleotide sequence ID" value="XM_006532058.1"/>
</dbReference>
<dbReference type="RefSeq" id="XP_006532122.1">
    <property type="nucleotide sequence ID" value="XM_006532059.3"/>
</dbReference>
<dbReference type="RefSeq" id="XP_006532123.1">
    <property type="nucleotide sequence ID" value="XM_006532060.3"/>
</dbReference>
<dbReference type="SMR" id="O88566"/>
<dbReference type="BioGRID" id="198288">
    <property type="interactions" value="6"/>
</dbReference>
<dbReference type="ComplexPortal" id="CPX-449">
    <property type="entry name" value="Beta-catenin destruction core complex, Apc-Axin2-Gsk3b variant"/>
</dbReference>
<dbReference type="ComplexPortal" id="CPX-452">
    <property type="entry name" value="Beta-catenin destruction core complex, Apc2-Axin2-Gsk3b"/>
</dbReference>
<dbReference type="ComplexPortal" id="CPX-457">
    <property type="entry name" value="Beta-catenin destruction core complex, Apc-Axin2-Gsk3a variant"/>
</dbReference>
<dbReference type="ComplexPortal" id="CPX-458">
    <property type="entry name" value="Beta-catenin destruction core complex, Apc2-Axin2-Gsk3a variant"/>
</dbReference>
<dbReference type="CORUM" id="O88566"/>
<dbReference type="DIP" id="DIP-42640N"/>
<dbReference type="FunCoup" id="O88566">
    <property type="interactions" value="1886"/>
</dbReference>
<dbReference type="IntAct" id="O88566">
    <property type="interactions" value="10"/>
</dbReference>
<dbReference type="MINT" id="O88566"/>
<dbReference type="STRING" id="10090.ENSMUSP00000051331"/>
<dbReference type="ChEMBL" id="CHEMBL1255128"/>
<dbReference type="iPTMnet" id="O88566"/>
<dbReference type="PhosphoSitePlus" id="O88566"/>
<dbReference type="PaxDb" id="10090-ENSMUSP00000051331"/>
<dbReference type="ProteomicsDB" id="277234"/>
<dbReference type="Antibodypedia" id="31648">
    <property type="antibodies" value="398 antibodies from 40 providers"/>
</dbReference>
<dbReference type="DNASU" id="12006"/>
<dbReference type="Ensembl" id="ENSMUST00000052915.14">
    <property type="protein sequence ID" value="ENSMUSP00000051331.8"/>
    <property type="gene ID" value="ENSMUSG00000000142.16"/>
</dbReference>
<dbReference type="GeneID" id="12006"/>
<dbReference type="KEGG" id="mmu:12006"/>
<dbReference type="UCSC" id="uc007mbu.2">
    <property type="organism name" value="mouse"/>
</dbReference>
<dbReference type="AGR" id="MGI:1270862"/>
<dbReference type="CTD" id="8313"/>
<dbReference type="MGI" id="MGI:1270862">
    <property type="gene designation" value="Axin2"/>
</dbReference>
<dbReference type="VEuPathDB" id="HostDB:ENSMUSG00000000142"/>
<dbReference type="eggNOG" id="KOG3589">
    <property type="taxonomic scope" value="Eukaryota"/>
</dbReference>
<dbReference type="GeneTree" id="ENSGT00940000157338"/>
<dbReference type="InParanoid" id="O88566"/>
<dbReference type="OMA" id="TEPCLAL"/>
<dbReference type="OrthoDB" id="10007451at2759"/>
<dbReference type="PhylomeDB" id="O88566"/>
<dbReference type="TreeFam" id="TF315454"/>
<dbReference type="Reactome" id="R-MMU-201681">
    <property type="pathway name" value="TCF dependent signaling in response to WNT"/>
</dbReference>
<dbReference type="Reactome" id="R-MMU-4641257">
    <property type="pathway name" value="Degradation of AXIN"/>
</dbReference>
<dbReference type="Reactome" id="R-MMU-5689880">
    <property type="pathway name" value="Ub-specific processing proteases"/>
</dbReference>
<dbReference type="BioGRID-ORCS" id="12006">
    <property type="hits" value="1 hit in 114 CRISPR screens"/>
</dbReference>
<dbReference type="ChiTaRS" id="Axin2">
    <property type="organism name" value="mouse"/>
</dbReference>
<dbReference type="PRO" id="PR:O88566"/>
<dbReference type="Proteomes" id="UP000000589">
    <property type="component" value="Chromosome 11"/>
</dbReference>
<dbReference type="RNAct" id="O88566">
    <property type="molecule type" value="protein"/>
</dbReference>
<dbReference type="Bgee" id="ENSMUSG00000000142">
    <property type="expression patterns" value="Expressed in meninx of spinal cord and 301 other cell types or tissues"/>
</dbReference>
<dbReference type="ExpressionAtlas" id="O88566">
    <property type="expression patterns" value="baseline and differential"/>
</dbReference>
<dbReference type="GO" id="GO:0030877">
    <property type="term" value="C:beta-catenin destruction complex"/>
    <property type="evidence" value="ECO:0000303"/>
    <property type="project" value="ComplexPortal"/>
</dbReference>
<dbReference type="GO" id="GO:0005813">
    <property type="term" value="C:centrosome"/>
    <property type="evidence" value="ECO:0000314"/>
    <property type="project" value="BHF-UCL"/>
</dbReference>
<dbReference type="GO" id="GO:0005737">
    <property type="term" value="C:cytoplasm"/>
    <property type="evidence" value="ECO:0007669"/>
    <property type="project" value="UniProtKB-SubCell"/>
</dbReference>
<dbReference type="GO" id="GO:0005634">
    <property type="term" value="C:nucleus"/>
    <property type="evidence" value="ECO:0000314"/>
    <property type="project" value="MGI"/>
</dbReference>
<dbReference type="GO" id="GO:0008013">
    <property type="term" value="F:beta-catenin binding"/>
    <property type="evidence" value="ECO:0007669"/>
    <property type="project" value="Ensembl"/>
</dbReference>
<dbReference type="GO" id="GO:0070411">
    <property type="term" value="F:I-SMAD binding"/>
    <property type="evidence" value="ECO:0000353"/>
    <property type="project" value="MGI"/>
</dbReference>
<dbReference type="GO" id="GO:0019901">
    <property type="term" value="F:protein kinase binding"/>
    <property type="evidence" value="ECO:0007669"/>
    <property type="project" value="Ensembl"/>
</dbReference>
<dbReference type="GO" id="GO:0031625">
    <property type="term" value="F:ubiquitin protein ligase binding"/>
    <property type="evidence" value="ECO:0000353"/>
    <property type="project" value="MGI"/>
</dbReference>
<dbReference type="GO" id="GO:0003180">
    <property type="term" value="P:aortic valve morphogenesis"/>
    <property type="evidence" value="ECO:0000315"/>
    <property type="project" value="BHF-UCL"/>
</dbReference>
<dbReference type="GO" id="GO:0030282">
    <property type="term" value="P:bone mineralization"/>
    <property type="evidence" value="ECO:0000315"/>
    <property type="project" value="MGI"/>
</dbReference>
<dbReference type="GO" id="GO:0060070">
    <property type="term" value="P:canonical Wnt signaling pathway"/>
    <property type="evidence" value="ECO:0007669"/>
    <property type="project" value="Ensembl"/>
</dbReference>
<dbReference type="GO" id="GO:0008283">
    <property type="term" value="P:cell population proliferation"/>
    <property type="evidence" value="ECO:0000315"/>
    <property type="project" value="MGI"/>
</dbReference>
<dbReference type="GO" id="GO:0071549">
    <property type="term" value="P:cellular response to dexamethasone stimulus"/>
    <property type="evidence" value="ECO:0007669"/>
    <property type="project" value="Ensembl"/>
</dbReference>
<dbReference type="GO" id="GO:0003413">
    <property type="term" value="P:chondrocyte differentiation involved in endochondral bone morphogenesis"/>
    <property type="evidence" value="ECO:0000315"/>
    <property type="project" value="MGI"/>
</dbReference>
<dbReference type="GO" id="GO:0009950">
    <property type="term" value="P:dorsal/ventral axis specification"/>
    <property type="evidence" value="ECO:0007669"/>
    <property type="project" value="Ensembl"/>
</dbReference>
<dbReference type="GO" id="GO:0001957">
    <property type="term" value="P:intramembranous ossification"/>
    <property type="evidence" value="ECO:0000315"/>
    <property type="project" value="MGI"/>
</dbReference>
<dbReference type="GO" id="GO:0043570">
    <property type="term" value="P:maintenance of DNA repeat elements"/>
    <property type="evidence" value="ECO:0007669"/>
    <property type="project" value="Ensembl"/>
</dbReference>
<dbReference type="GO" id="GO:0003183">
    <property type="term" value="P:mitral valve morphogenesis"/>
    <property type="evidence" value="ECO:0000315"/>
    <property type="project" value="BHF-UCL"/>
</dbReference>
<dbReference type="GO" id="GO:0048255">
    <property type="term" value="P:mRNA stabilization"/>
    <property type="evidence" value="ECO:0007669"/>
    <property type="project" value="Ensembl"/>
</dbReference>
<dbReference type="GO" id="GO:0090090">
    <property type="term" value="P:negative regulation of canonical Wnt signaling pathway"/>
    <property type="evidence" value="ECO:0000315"/>
    <property type="project" value="BHF-UCL"/>
</dbReference>
<dbReference type="GO" id="GO:0045668">
    <property type="term" value="P:negative regulation of osteoblast differentiation"/>
    <property type="evidence" value="ECO:0000315"/>
    <property type="project" value="MGI"/>
</dbReference>
<dbReference type="GO" id="GO:0033689">
    <property type="term" value="P:negative regulation of osteoblast proliferation"/>
    <property type="evidence" value="ECO:0000315"/>
    <property type="project" value="MGI"/>
</dbReference>
<dbReference type="GO" id="GO:0042476">
    <property type="term" value="P:odontogenesis"/>
    <property type="evidence" value="ECO:0007669"/>
    <property type="project" value="Ensembl"/>
</dbReference>
<dbReference type="GO" id="GO:0001649">
    <property type="term" value="P:osteoblast differentiation"/>
    <property type="evidence" value="ECO:0000315"/>
    <property type="project" value="MGI"/>
</dbReference>
<dbReference type="GO" id="GO:0033687">
    <property type="term" value="P:osteoblast proliferation"/>
    <property type="evidence" value="ECO:0000315"/>
    <property type="project" value="MGI"/>
</dbReference>
<dbReference type="GO" id="GO:0010718">
    <property type="term" value="P:positive regulation of epithelial to mesenchymal transition"/>
    <property type="evidence" value="ECO:0007669"/>
    <property type="project" value="Ensembl"/>
</dbReference>
<dbReference type="GO" id="GO:0045600">
    <property type="term" value="P:positive regulation of fat cell differentiation"/>
    <property type="evidence" value="ECO:0007669"/>
    <property type="project" value="Ensembl"/>
</dbReference>
<dbReference type="GO" id="GO:0043161">
    <property type="term" value="P:proteasome-mediated ubiquitin-dependent protein catabolic process"/>
    <property type="evidence" value="ECO:0000303"/>
    <property type="project" value="ComplexPortal"/>
</dbReference>
<dbReference type="GO" id="GO:0008104">
    <property type="term" value="P:protein localization"/>
    <property type="evidence" value="ECO:0007669"/>
    <property type="project" value="Ensembl"/>
</dbReference>
<dbReference type="GO" id="GO:0070602">
    <property type="term" value="P:regulation of centromeric sister chromatid cohesion"/>
    <property type="evidence" value="ECO:0000315"/>
    <property type="project" value="BHF-UCL"/>
</dbReference>
<dbReference type="GO" id="GO:0061181">
    <property type="term" value="P:regulation of chondrocyte development"/>
    <property type="evidence" value="ECO:0000315"/>
    <property type="project" value="MGI"/>
</dbReference>
<dbReference type="GO" id="GO:1903053">
    <property type="term" value="P:regulation of extracellular matrix organization"/>
    <property type="evidence" value="ECO:0000315"/>
    <property type="project" value="BHF-UCL"/>
</dbReference>
<dbReference type="GO" id="GO:0032423">
    <property type="term" value="P:regulation of mismatch repair"/>
    <property type="evidence" value="ECO:0007669"/>
    <property type="project" value="Ensembl"/>
</dbReference>
<dbReference type="GO" id="GO:0030111">
    <property type="term" value="P:regulation of Wnt signaling pathway"/>
    <property type="evidence" value="ECO:0000314"/>
    <property type="project" value="MGI"/>
</dbReference>
<dbReference type="GO" id="GO:0003139">
    <property type="term" value="P:secondary heart field specification"/>
    <property type="evidence" value="ECO:0000316"/>
    <property type="project" value="MGI"/>
</dbReference>
<dbReference type="GO" id="GO:0001756">
    <property type="term" value="P:somitogenesis"/>
    <property type="evidence" value="ECO:0000314"/>
    <property type="project" value="MGI"/>
</dbReference>
<dbReference type="GO" id="GO:0072089">
    <property type="term" value="P:stem cell proliferation"/>
    <property type="evidence" value="ECO:0000315"/>
    <property type="project" value="MGI"/>
</dbReference>
<dbReference type="CDD" id="cd11582">
    <property type="entry name" value="Axin_TNKS_binding"/>
    <property type="match status" value="1"/>
</dbReference>
<dbReference type="CDD" id="cd08707">
    <property type="entry name" value="RGS_Axin"/>
    <property type="match status" value="1"/>
</dbReference>
<dbReference type="FunFam" id="1.10.167.10:FF:000003">
    <property type="entry name" value="Axin 1"/>
    <property type="match status" value="1"/>
</dbReference>
<dbReference type="FunFam" id="1.10.196.10:FF:000002">
    <property type="entry name" value="Axin 1"/>
    <property type="match status" value="1"/>
</dbReference>
<dbReference type="FunFam" id="2.40.240.130:FF:000002">
    <property type="entry name" value="Axin 1"/>
    <property type="match status" value="1"/>
</dbReference>
<dbReference type="Gene3D" id="1.10.196.10">
    <property type="match status" value="1"/>
</dbReference>
<dbReference type="Gene3D" id="2.40.240.130">
    <property type="match status" value="1"/>
</dbReference>
<dbReference type="Gene3D" id="1.10.167.10">
    <property type="entry name" value="Regulator of G-protein Signalling 4, domain 2"/>
    <property type="match status" value="1"/>
</dbReference>
<dbReference type="InterPro" id="IPR043581">
    <property type="entry name" value="Axin-like"/>
</dbReference>
<dbReference type="InterPro" id="IPR014936">
    <property type="entry name" value="Axin_b-cat-bd"/>
</dbReference>
<dbReference type="InterPro" id="IPR032101">
    <property type="entry name" value="Axin_TNKS-bd"/>
</dbReference>
<dbReference type="InterPro" id="IPR001158">
    <property type="entry name" value="DIX"/>
</dbReference>
<dbReference type="InterPro" id="IPR038207">
    <property type="entry name" value="DIX_dom_sf"/>
</dbReference>
<dbReference type="InterPro" id="IPR016137">
    <property type="entry name" value="RGS"/>
</dbReference>
<dbReference type="InterPro" id="IPR036305">
    <property type="entry name" value="RGS_sf"/>
</dbReference>
<dbReference type="InterPro" id="IPR024066">
    <property type="entry name" value="RGS_subdom1/3"/>
</dbReference>
<dbReference type="InterPro" id="IPR044926">
    <property type="entry name" value="RGS_subdomain_2"/>
</dbReference>
<dbReference type="InterPro" id="IPR029071">
    <property type="entry name" value="Ubiquitin-like_domsf"/>
</dbReference>
<dbReference type="PANTHER" id="PTHR46102">
    <property type="entry name" value="AXIN"/>
    <property type="match status" value="1"/>
</dbReference>
<dbReference type="PANTHER" id="PTHR46102:SF1">
    <property type="entry name" value="AXIN-2"/>
    <property type="match status" value="1"/>
</dbReference>
<dbReference type="Pfam" id="PF16646">
    <property type="entry name" value="AXIN1_TNKS_BD"/>
    <property type="match status" value="1"/>
</dbReference>
<dbReference type="Pfam" id="PF08833">
    <property type="entry name" value="Axin_b-cat_bind"/>
    <property type="match status" value="1"/>
</dbReference>
<dbReference type="Pfam" id="PF00778">
    <property type="entry name" value="DIX"/>
    <property type="match status" value="1"/>
</dbReference>
<dbReference type="Pfam" id="PF00615">
    <property type="entry name" value="RGS"/>
    <property type="match status" value="1"/>
</dbReference>
<dbReference type="PRINTS" id="PR01301">
    <property type="entry name" value="RGSPROTEIN"/>
</dbReference>
<dbReference type="SMART" id="SM00021">
    <property type="entry name" value="DAX"/>
    <property type="match status" value="1"/>
</dbReference>
<dbReference type="SMART" id="SM00315">
    <property type="entry name" value="RGS"/>
    <property type="match status" value="1"/>
</dbReference>
<dbReference type="SUPFAM" id="SSF48097">
    <property type="entry name" value="Regulator of G-protein signaling, RGS"/>
    <property type="match status" value="1"/>
</dbReference>
<dbReference type="SUPFAM" id="SSF54236">
    <property type="entry name" value="Ubiquitin-like"/>
    <property type="match status" value="1"/>
</dbReference>
<dbReference type="PROSITE" id="PS50841">
    <property type="entry name" value="DIX"/>
    <property type="match status" value="1"/>
</dbReference>
<dbReference type="PROSITE" id="PS50132">
    <property type="entry name" value="RGS"/>
    <property type="match status" value="1"/>
</dbReference>
<organism>
    <name type="scientific">Mus musculus</name>
    <name type="common">Mouse</name>
    <dbReference type="NCBI Taxonomy" id="10090"/>
    <lineage>
        <taxon>Eukaryota</taxon>
        <taxon>Metazoa</taxon>
        <taxon>Chordata</taxon>
        <taxon>Craniata</taxon>
        <taxon>Vertebrata</taxon>
        <taxon>Euteleostomi</taxon>
        <taxon>Mammalia</taxon>
        <taxon>Eutheria</taxon>
        <taxon>Euarchontoglires</taxon>
        <taxon>Glires</taxon>
        <taxon>Rodentia</taxon>
        <taxon>Myomorpha</taxon>
        <taxon>Muroidea</taxon>
        <taxon>Muridae</taxon>
        <taxon>Murinae</taxon>
        <taxon>Mus</taxon>
        <taxon>Mus</taxon>
    </lineage>
</organism>
<protein>
    <recommendedName>
        <fullName evidence="11">Axin-2</fullName>
    </recommendedName>
    <alternativeName>
        <fullName>Axin-like protein</fullName>
        <shortName evidence="11">Axil</shortName>
    </alternativeName>
    <alternativeName>
        <fullName>Axis inhibition protein 2</fullName>
    </alternativeName>
    <alternativeName>
        <fullName evidence="11">Conductin</fullName>
    </alternativeName>
</protein>
<feature type="chain" id="PRO_0000220896" description="Axin-2">
    <location>
        <begin position="1"/>
        <end position="840"/>
    </location>
</feature>
<feature type="domain" description="RGS" evidence="5">
    <location>
        <begin position="81"/>
        <end position="200"/>
    </location>
</feature>
<feature type="domain" description="DIX" evidence="4">
    <location>
        <begin position="758"/>
        <end position="840"/>
    </location>
</feature>
<feature type="region of interest" description="Disordered" evidence="6">
    <location>
        <begin position="1"/>
        <end position="75"/>
    </location>
</feature>
<feature type="region of interest" description="Disordered" evidence="6">
    <location>
        <begin position="300"/>
        <end position="363"/>
    </location>
</feature>
<feature type="region of interest" description="Interaction with GSK3B" evidence="1">
    <location>
        <begin position="327"/>
        <end position="413"/>
    </location>
</feature>
<feature type="region of interest" description="Disordered" evidence="6">
    <location>
        <begin position="398"/>
        <end position="435"/>
    </location>
</feature>
<feature type="region of interest" description="Interaction with beta-catenin" evidence="1">
    <location>
        <begin position="413"/>
        <end position="478"/>
    </location>
</feature>
<feature type="region of interest" description="Disordered" evidence="6">
    <location>
        <begin position="447"/>
        <end position="485"/>
    </location>
</feature>
<feature type="region of interest" description="Disordered" evidence="6">
    <location>
        <begin position="572"/>
        <end position="614"/>
    </location>
</feature>
<feature type="region of interest" description="Disordered" evidence="6">
    <location>
        <begin position="715"/>
        <end position="745"/>
    </location>
</feature>
<feature type="short sequence motif" description="Tankyrase-binding motif">
    <location>
        <begin position="21"/>
        <end position="30"/>
    </location>
</feature>
<feature type="compositionally biased region" description="Polar residues" evidence="6">
    <location>
        <begin position="42"/>
        <end position="55"/>
    </location>
</feature>
<feature type="compositionally biased region" description="Basic and acidic residues" evidence="6">
    <location>
        <begin position="56"/>
        <end position="69"/>
    </location>
</feature>
<feature type="compositionally biased region" description="Low complexity" evidence="6">
    <location>
        <begin position="303"/>
        <end position="318"/>
    </location>
</feature>
<feature type="compositionally biased region" description="Basic residues" evidence="6">
    <location>
        <begin position="468"/>
        <end position="478"/>
    </location>
</feature>
<feature type="sequence conflict" description="In Ref. 2; AAF22800." evidence="10" ref="2">
    <original>R</original>
    <variation>K</variation>
    <location>
        <position position="101"/>
    </location>
</feature>
<feature type="sequence conflict" description="In Ref. 2; AAF22800." evidence="10" ref="2">
    <original>H</original>
    <variation>Y</variation>
    <location>
        <position position="474"/>
    </location>
</feature>
<feature type="sequence conflict" description="In Ref. 1; AAC26047." evidence="10" ref="1">
    <original>P</original>
    <variation>S</variation>
    <location>
        <position position="484"/>
    </location>
</feature>
<feature type="sequence conflict" description="In Ref. 2; AAF22800." evidence="10" ref="2">
    <original>F</original>
    <variation>S</variation>
    <location>
        <position position="503"/>
    </location>
</feature>
<feature type="sequence conflict" description="In Ref. 1; AAC26047." evidence="10" ref="1">
    <original>A</original>
    <variation>G</variation>
    <location>
        <position position="603"/>
    </location>
</feature>
<feature type="sequence conflict" description="In Ref. 1; AAC26047 and 2; AAF22800." evidence="10" ref="1 2">
    <original>C</original>
    <variation>R</variation>
    <location>
        <position position="648"/>
    </location>
</feature>
<keyword id="KW-0013">ADP-ribosylation</keyword>
<keyword id="KW-0963">Cytoplasm</keyword>
<keyword id="KW-0597">Phosphoprotein</keyword>
<keyword id="KW-1185">Reference proteome</keyword>
<keyword id="KW-0043">Tumor suppressor</keyword>
<keyword id="KW-0832">Ubl conjugation</keyword>
<keyword id="KW-0879">Wnt signaling pathway</keyword>
<comment type="function">
    <text evidence="2">Inhibitor of the Wnt signaling pathway. Down-regulates beta-catenin. Probably facilitate the phosphorylation of beta-catenin and APC by GSK3B.</text>
</comment>
<comment type="subunit">
    <text evidence="3 7">Interacts with glycogen synthase kinase-3 beta (GSK3B) and beta-catenin. The interaction between axin and beta-catenin occurs via the armadillo repeats contained in beta-catenin. Interacts with SMAD7 and RNF111 (By similarity). Interacts with ANKRD6 (PubMed:12183362). Interacts with SIAH1 (By similarity). Interacts with SIAH2 (By similarity).</text>
</comment>
<comment type="interaction">
    <interactant intactId="EBI-7690990">
        <id>O88566</id>
    </interactant>
    <interactant intactId="EBI-8869590">
        <id>Q8N944</id>
        <label>AMER3</label>
    </interactant>
    <organismsDiffer>true</organismsDiffer>
    <experiments>2</experiments>
</comment>
<comment type="interaction">
    <interactant intactId="EBI-7690990">
        <id>O88566</id>
    </interactant>
    <interactant intactId="EBI-367462">
        <id>Q12834</id>
        <label>CDC20</label>
    </interactant>
    <organismsDiffer>true</organismsDiffer>
    <experiments>2</experiments>
</comment>
<comment type="interaction">
    <interactant intactId="EBI-7690990">
        <id>O88566</id>
    </interactant>
    <interactant intactId="EBI-1053100">
        <id>Q9BV73</id>
        <label>CEP250</label>
    </interactant>
    <organismsDiffer>true</organismsDiffer>
    <experiments>3</experiments>
</comment>
<comment type="interaction">
    <interactant intactId="EBI-7690990">
        <id>O88566</id>
    </interactant>
    <interactant intactId="EBI-714215">
        <id>Q15583</id>
        <label>TGIF1</label>
    </interactant>
    <organismsDiffer>true</organismsDiffer>
    <experiments>3</experiments>
</comment>
<comment type="subcellular location">
    <subcellularLocation>
        <location evidence="3">Cytoplasm</location>
    </subcellularLocation>
</comment>
<comment type="tissue specificity">
    <text evidence="8">Expressed in Tcf7-positive innate-like T-cells (at protein level).</text>
</comment>
<comment type="developmental stage">
    <text evidence="9">Expressed in the distal tooth bud epithelium during the bud stage of mandibular molar tooth development.</text>
</comment>
<comment type="domain">
    <text evidence="1">The tankyrase-binding motif (also named TBD) is required for interaction with tankyrase TNKS and TNKS2.</text>
</comment>
<comment type="PTM">
    <text evidence="3">ADP-ribosylated by tankyrase TNKS and TNKS2. Poly-ADP-ribosylated protein is recognized by RNF146, followed by ubiquitination and subsequent activation of the Wnt signaling pathway.</text>
</comment>
<comment type="PTM">
    <text evidence="3">Ubiquitinated by RNF146 when poly-ADP-ribosylated, leading to its degradation and subsequent activation of the Wnt signaling pathway. Deubiquitinated by USP34, deubiquitinated downstream of beta-catenin stabilization step: deubiquitination is important Wnt signaling to positively regulate beta-catenin (CTNBB1)-mediated transcription.</text>
</comment>
<comment type="PTM">
    <text evidence="2">Probably phosphorylated by GSK3B and dephosphorylated by PP2A.</text>
</comment>
<proteinExistence type="evidence at protein level"/>